<dbReference type="EC" id="7.1.1.-" evidence="1"/>
<dbReference type="EMBL" id="AM039952">
    <property type="protein sequence ID" value="CAJ24524.1"/>
    <property type="molecule type" value="Genomic_DNA"/>
</dbReference>
<dbReference type="RefSeq" id="WP_003485557.1">
    <property type="nucleotide sequence ID" value="NZ_CP017190.1"/>
</dbReference>
<dbReference type="SMR" id="Q3BRN7"/>
<dbReference type="STRING" id="456327.BJD11_08645"/>
<dbReference type="GeneID" id="97510983"/>
<dbReference type="KEGG" id="xcv:XCV2845"/>
<dbReference type="eggNOG" id="COG1143">
    <property type="taxonomic scope" value="Bacteria"/>
</dbReference>
<dbReference type="HOGENOM" id="CLU_067218_5_1_6"/>
<dbReference type="Proteomes" id="UP000007069">
    <property type="component" value="Chromosome"/>
</dbReference>
<dbReference type="GO" id="GO:0005886">
    <property type="term" value="C:plasma membrane"/>
    <property type="evidence" value="ECO:0007669"/>
    <property type="project" value="UniProtKB-SubCell"/>
</dbReference>
<dbReference type="GO" id="GO:0051539">
    <property type="term" value="F:4 iron, 4 sulfur cluster binding"/>
    <property type="evidence" value="ECO:0007669"/>
    <property type="project" value="UniProtKB-KW"/>
</dbReference>
<dbReference type="GO" id="GO:0005506">
    <property type="term" value="F:iron ion binding"/>
    <property type="evidence" value="ECO:0007669"/>
    <property type="project" value="UniProtKB-UniRule"/>
</dbReference>
<dbReference type="GO" id="GO:0050136">
    <property type="term" value="F:NADH:ubiquinone reductase (non-electrogenic) activity"/>
    <property type="evidence" value="ECO:0007669"/>
    <property type="project" value="UniProtKB-UniRule"/>
</dbReference>
<dbReference type="GO" id="GO:0048038">
    <property type="term" value="F:quinone binding"/>
    <property type="evidence" value="ECO:0007669"/>
    <property type="project" value="UniProtKB-KW"/>
</dbReference>
<dbReference type="GO" id="GO:0009060">
    <property type="term" value="P:aerobic respiration"/>
    <property type="evidence" value="ECO:0007669"/>
    <property type="project" value="TreeGrafter"/>
</dbReference>
<dbReference type="FunFam" id="3.30.70.3270:FF:000003">
    <property type="entry name" value="NADH-quinone oxidoreductase subunit I"/>
    <property type="match status" value="1"/>
</dbReference>
<dbReference type="Gene3D" id="3.30.70.3270">
    <property type="match status" value="1"/>
</dbReference>
<dbReference type="HAMAP" id="MF_01351">
    <property type="entry name" value="NDH1_NuoI"/>
    <property type="match status" value="1"/>
</dbReference>
<dbReference type="InterPro" id="IPR017896">
    <property type="entry name" value="4Fe4S_Fe-S-bd"/>
</dbReference>
<dbReference type="InterPro" id="IPR017900">
    <property type="entry name" value="4Fe4S_Fe_S_CS"/>
</dbReference>
<dbReference type="InterPro" id="IPR010226">
    <property type="entry name" value="NADH_quinone_OxRdtase_chainI"/>
</dbReference>
<dbReference type="NCBIfam" id="TIGR01971">
    <property type="entry name" value="NuoI"/>
    <property type="match status" value="1"/>
</dbReference>
<dbReference type="NCBIfam" id="NF004538">
    <property type="entry name" value="PRK05888.1-4"/>
    <property type="match status" value="1"/>
</dbReference>
<dbReference type="NCBIfam" id="NF004539">
    <property type="entry name" value="PRK05888.1-5"/>
    <property type="match status" value="1"/>
</dbReference>
<dbReference type="PANTHER" id="PTHR10849:SF20">
    <property type="entry name" value="NADH DEHYDROGENASE [UBIQUINONE] IRON-SULFUR PROTEIN 8, MITOCHONDRIAL"/>
    <property type="match status" value="1"/>
</dbReference>
<dbReference type="PANTHER" id="PTHR10849">
    <property type="entry name" value="NADH DEHYDROGENASE UBIQUINONE IRON-SULFUR PROTEIN 8, MITOCHONDRIAL"/>
    <property type="match status" value="1"/>
</dbReference>
<dbReference type="Pfam" id="PF12838">
    <property type="entry name" value="Fer4_7"/>
    <property type="match status" value="1"/>
</dbReference>
<dbReference type="SUPFAM" id="SSF54862">
    <property type="entry name" value="4Fe-4S ferredoxins"/>
    <property type="match status" value="1"/>
</dbReference>
<dbReference type="PROSITE" id="PS00198">
    <property type="entry name" value="4FE4S_FER_1"/>
    <property type="match status" value="2"/>
</dbReference>
<dbReference type="PROSITE" id="PS51379">
    <property type="entry name" value="4FE4S_FER_2"/>
    <property type="match status" value="2"/>
</dbReference>
<accession>Q3BRN7</accession>
<organism>
    <name type="scientific">Xanthomonas euvesicatoria pv. vesicatoria (strain 85-10)</name>
    <name type="common">Xanthomonas campestris pv. vesicatoria</name>
    <dbReference type="NCBI Taxonomy" id="316273"/>
    <lineage>
        <taxon>Bacteria</taxon>
        <taxon>Pseudomonadati</taxon>
        <taxon>Pseudomonadota</taxon>
        <taxon>Gammaproteobacteria</taxon>
        <taxon>Lysobacterales</taxon>
        <taxon>Lysobacteraceae</taxon>
        <taxon>Xanthomonas</taxon>
    </lineage>
</organism>
<sequence>MNKITHYFKSLLLLELLGGLWLTLKYTFKPKYTVLYPMEKFPQSPRFRGLHALRRYPNGEERCIACKLCEAVCPALAITIDSAKREDGTRRTTRYDIDLFKCIFCGFCEESCPVDSIVETHILEYHFEKRGENIVNKPQLLAIGDRLETEIAERRAADAAFR</sequence>
<gene>
    <name evidence="1" type="primary">nuoI</name>
    <name type="ordered locus">XCV2845</name>
</gene>
<name>NUOI_XANE5</name>
<evidence type="ECO:0000255" key="1">
    <source>
        <dbReference type="HAMAP-Rule" id="MF_01351"/>
    </source>
</evidence>
<protein>
    <recommendedName>
        <fullName evidence="1">NADH-quinone oxidoreductase subunit I</fullName>
        <ecNumber evidence="1">7.1.1.-</ecNumber>
    </recommendedName>
    <alternativeName>
        <fullName evidence="1">NADH dehydrogenase I subunit I</fullName>
    </alternativeName>
    <alternativeName>
        <fullName evidence="1">NDH-1 subunit I</fullName>
    </alternativeName>
</protein>
<comment type="function">
    <text evidence="1">NDH-1 shuttles electrons from NADH, via FMN and iron-sulfur (Fe-S) centers, to quinones in the respiratory chain. The immediate electron acceptor for the enzyme in this species is believed to be ubiquinone. Couples the redox reaction to proton translocation (for every two electrons transferred, four hydrogen ions are translocated across the cytoplasmic membrane), and thus conserves the redox energy in a proton gradient.</text>
</comment>
<comment type="catalytic activity">
    <reaction evidence="1">
        <text>a quinone + NADH + 5 H(+)(in) = a quinol + NAD(+) + 4 H(+)(out)</text>
        <dbReference type="Rhea" id="RHEA:57888"/>
        <dbReference type="ChEBI" id="CHEBI:15378"/>
        <dbReference type="ChEBI" id="CHEBI:24646"/>
        <dbReference type="ChEBI" id="CHEBI:57540"/>
        <dbReference type="ChEBI" id="CHEBI:57945"/>
        <dbReference type="ChEBI" id="CHEBI:132124"/>
    </reaction>
</comment>
<comment type="cofactor">
    <cofactor evidence="1">
        <name>[4Fe-4S] cluster</name>
        <dbReference type="ChEBI" id="CHEBI:49883"/>
    </cofactor>
    <text evidence="1">Binds 2 [4Fe-4S] clusters per subunit.</text>
</comment>
<comment type="subunit">
    <text evidence="1">NDH-1 is composed of 14 different subunits. Subunits NuoA, H, J, K, L, M, N constitute the membrane sector of the complex.</text>
</comment>
<comment type="subcellular location">
    <subcellularLocation>
        <location evidence="1">Cell inner membrane</location>
        <topology evidence="1">Peripheral membrane protein</topology>
    </subcellularLocation>
</comment>
<comment type="similarity">
    <text evidence="1">Belongs to the complex I 23 kDa subunit family.</text>
</comment>
<reference key="1">
    <citation type="journal article" date="2005" name="J. Bacteriol.">
        <title>Insights into genome plasticity and pathogenicity of the plant pathogenic Bacterium Xanthomonas campestris pv. vesicatoria revealed by the complete genome sequence.</title>
        <authorList>
            <person name="Thieme F."/>
            <person name="Koebnik R."/>
            <person name="Bekel T."/>
            <person name="Berger C."/>
            <person name="Boch J."/>
            <person name="Buettner D."/>
            <person name="Caldana C."/>
            <person name="Gaigalat L."/>
            <person name="Goesmann A."/>
            <person name="Kay S."/>
            <person name="Kirchner O."/>
            <person name="Lanz C."/>
            <person name="Linke B."/>
            <person name="McHardy A.C."/>
            <person name="Meyer F."/>
            <person name="Mittenhuber G."/>
            <person name="Nies D.H."/>
            <person name="Niesbach-Kloesgen U."/>
            <person name="Patschkowski T."/>
            <person name="Rueckert C."/>
            <person name="Rupp O."/>
            <person name="Schneiker S."/>
            <person name="Schuster S.C."/>
            <person name="Vorhoelter F.J."/>
            <person name="Weber E."/>
            <person name="Puehler A."/>
            <person name="Bonas U."/>
            <person name="Bartels D."/>
            <person name="Kaiser O."/>
        </authorList>
    </citation>
    <scope>NUCLEOTIDE SEQUENCE [LARGE SCALE GENOMIC DNA]</scope>
    <source>
        <strain>85-10</strain>
    </source>
</reference>
<proteinExistence type="inferred from homology"/>
<feature type="chain" id="PRO_0000250953" description="NADH-quinone oxidoreductase subunit I">
    <location>
        <begin position="1"/>
        <end position="162"/>
    </location>
</feature>
<feature type="domain" description="4Fe-4S ferredoxin-type 1" evidence="1">
    <location>
        <begin position="53"/>
        <end position="83"/>
    </location>
</feature>
<feature type="domain" description="4Fe-4S ferredoxin-type 2" evidence="1">
    <location>
        <begin position="93"/>
        <end position="122"/>
    </location>
</feature>
<feature type="binding site" evidence="1">
    <location>
        <position position="63"/>
    </location>
    <ligand>
        <name>[4Fe-4S] cluster</name>
        <dbReference type="ChEBI" id="CHEBI:49883"/>
        <label>1</label>
    </ligand>
</feature>
<feature type="binding site" evidence="1">
    <location>
        <position position="66"/>
    </location>
    <ligand>
        <name>[4Fe-4S] cluster</name>
        <dbReference type="ChEBI" id="CHEBI:49883"/>
        <label>1</label>
    </ligand>
</feature>
<feature type="binding site" evidence="1">
    <location>
        <position position="69"/>
    </location>
    <ligand>
        <name>[4Fe-4S] cluster</name>
        <dbReference type="ChEBI" id="CHEBI:49883"/>
        <label>1</label>
    </ligand>
</feature>
<feature type="binding site" evidence="1">
    <location>
        <position position="73"/>
    </location>
    <ligand>
        <name>[4Fe-4S] cluster</name>
        <dbReference type="ChEBI" id="CHEBI:49883"/>
        <label>2</label>
    </ligand>
</feature>
<feature type="binding site" evidence="1">
    <location>
        <position position="102"/>
    </location>
    <ligand>
        <name>[4Fe-4S] cluster</name>
        <dbReference type="ChEBI" id="CHEBI:49883"/>
        <label>2</label>
    </ligand>
</feature>
<feature type="binding site" evidence="1">
    <location>
        <position position="105"/>
    </location>
    <ligand>
        <name>[4Fe-4S] cluster</name>
        <dbReference type="ChEBI" id="CHEBI:49883"/>
        <label>2</label>
    </ligand>
</feature>
<feature type="binding site" evidence="1">
    <location>
        <position position="108"/>
    </location>
    <ligand>
        <name>[4Fe-4S] cluster</name>
        <dbReference type="ChEBI" id="CHEBI:49883"/>
        <label>2</label>
    </ligand>
</feature>
<feature type="binding site" evidence="1">
    <location>
        <position position="112"/>
    </location>
    <ligand>
        <name>[4Fe-4S] cluster</name>
        <dbReference type="ChEBI" id="CHEBI:49883"/>
        <label>1</label>
    </ligand>
</feature>
<keyword id="KW-0004">4Fe-4S</keyword>
<keyword id="KW-0997">Cell inner membrane</keyword>
<keyword id="KW-1003">Cell membrane</keyword>
<keyword id="KW-0408">Iron</keyword>
<keyword id="KW-0411">Iron-sulfur</keyword>
<keyword id="KW-0472">Membrane</keyword>
<keyword id="KW-0479">Metal-binding</keyword>
<keyword id="KW-0520">NAD</keyword>
<keyword id="KW-0874">Quinone</keyword>
<keyword id="KW-0677">Repeat</keyword>
<keyword id="KW-1278">Translocase</keyword>
<keyword id="KW-0830">Ubiquinone</keyword>